<name>IGF1B_CYPCA</name>
<proteinExistence type="evidence at transcript level"/>
<reference key="1">
    <citation type="journal article" date="1997" name="Biochem. Mol. Biol. Int.">
        <title>Molecular cloning and growth hormone-regulated gene expression of carp insulin-like growth factor-I.</title>
        <authorList>
            <person name="Hashimoto H."/>
            <person name="Mikawa S."/>
            <person name="Takayama E."/>
            <person name="Yokoyama Y."/>
            <person name="Toyohara H."/>
            <person name="Sakaguchi M."/>
        </authorList>
    </citation>
    <scope>NUCLEOTIDE SEQUENCE [MRNA]</scope>
    <source>
        <tissue>Liver</tissue>
    </source>
</reference>
<dbReference type="EMBL" id="D83272">
    <property type="protein sequence ID" value="BAA11879.1"/>
    <property type="molecule type" value="mRNA"/>
</dbReference>
<dbReference type="RefSeq" id="XP_042596746.1">
    <property type="nucleotide sequence ID" value="XM_042740812.1"/>
</dbReference>
<dbReference type="SMR" id="Q90326"/>
<dbReference type="Ensembl" id="ENSCCRT00015098137.1">
    <property type="protein sequence ID" value="ENSCCRP00015095059.1"/>
    <property type="gene ID" value="ENSCCRG00015038324.1"/>
</dbReference>
<dbReference type="Ensembl" id="ENSCCRT00020005421.1">
    <property type="protein sequence ID" value="ENSCCRP00020004765.1"/>
    <property type="gene ID" value="ENSCCRG00020002702.1"/>
</dbReference>
<dbReference type="GeneID" id="109077408"/>
<dbReference type="OrthoDB" id="8936076at2759"/>
<dbReference type="Proteomes" id="UP000694384">
    <property type="component" value="Unplaced"/>
</dbReference>
<dbReference type="Proteomes" id="UP000694427">
    <property type="component" value="Unplaced"/>
</dbReference>
<dbReference type="Proteomes" id="UP000694700">
    <property type="component" value="Unplaced"/>
</dbReference>
<dbReference type="Proteomes" id="UP000694701">
    <property type="component" value="Unplaced"/>
</dbReference>
<dbReference type="Proteomes" id="UP001155660">
    <property type="component" value="Chromosome A4"/>
</dbReference>
<dbReference type="GO" id="GO:0005615">
    <property type="term" value="C:extracellular space"/>
    <property type="evidence" value="ECO:0007669"/>
    <property type="project" value="InterPro"/>
</dbReference>
<dbReference type="GO" id="GO:0008083">
    <property type="term" value="F:growth factor activity"/>
    <property type="evidence" value="ECO:0007669"/>
    <property type="project" value="UniProtKB-KW"/>
</dbReference>
<dbReference type="GO" id="GO:0005179">
    <property type="term" value="F:hormone activity"/>
    <property type="evidence" value="ECO:0007669"/>
    <property type="project" value="InterPro"/>
</dbReference>
<dbReference type="GO" id="GO:0005159">
    <property type="term" value="F:insulin-like growth factor receptor binding"/>
    <property type="evidence" value="ECO:0007669"/>
    <property type="project" value="TreeGrafter"/>
</dbReference>
<dbReference type="GO" id="GO:0008283">
    <property type="term" value="P:cell population proliferation"/>
    <property type="evidence" value="ECO:0007669"/>
    <property type="project" value="TreeGrafter"/>
</dbReference>
<dbReference type="GO" id="GO:0048009">
    <property type="term" value="P:insulin-like growth factor receptor signaling pathway"/>
    <property type="evidence" value="ECO:0007669"/>
    <property type="project" value="TreeGrafter"/>
</dbReference>
<dbReference type="GO" id="GO:0043066">
    <property type="term" value="P:negative regulation of apoptotic process"/>
    <property type="evidence" value="ECO:0007669"/>
    <property type="project" value="TreeGrafter"/>
</dbReference>
<dbReference type="GO" id="GO:0008284">
    <property type="term" value="P:positive regulation of cell population proliferation"/>
    <property type="evidence" value="ECO:0007669"/>
    <property type="project" value="TreeGrafter"/>
</dbReference>
<dbReference type="GO" id="GO:0051897">
    <property type="term" value="P:positive regulation of phosphatidylinositol 3-kinase/protein kinase B signal transduction"/>
    <property type="evidence" value="ECO:0007669"/>
    <property type="project" value="TreeGrafter"/>
</dbReference>
<dbReference type="CDD" id="cd04368">
    <property type="entry name" value="IlGF"/>
    <property type="match status" value="1"/>
</dbReference>
<dbReference type="FunFam" id="1.10.100.10:FF:000001">
    <property type="entry name" value="insulin-like growth factor I isoform X1"/>
    <property type="match status" value="1"/>
</dbReference>
<dbReference type="Gene3D" id="1.10.100.10">
    <property type="entry name" value="Insulin-like"/>
    <property type="match status" value="1"/>
</dbReference>
<dbReference type="InterPro" id="IPR022341">
    <property type="entry name" value="IGF-I"/>
</dbReference>
<dbReference type="InterPro" id="IPR016179">
    <property type="entry name" value="Insulin-like"/>
</dbReference>
<dbReference type="InterPro" id="IPR022350">
    <property type="entry name" value="Insulin-like_growth_factor"/>
</dbReference>
<dbReference type="InterPro" id="IPR036438">
    <property type="entry name" value="Insulin-like_sf"/>
</dbReference>
<dbReference type="InterPro" id="IPR022353">
    <property type="entry name" value="Insulin_CS"/>
</dbReference>
<dbReference type="InterPro" id="IPR022352">
    <property type="entry name" value="Insulin_family"/>
</dbReference>
<dbReference type="PANTHER" id="PTHR46845:SF3">
    <property type="entry name" value="INSULIN-LIKE GROWTH FACTOR 1"/>
    <property type="match status" value="1"/>
</dbReference>
<dbReference type="PANTHER" id="PTHR46845">
    <property type="entry name" value="INSULIN-LIKE GROWTH FACTOR I"/>
    <property type="match status" value="1"/>
</dbReference>
<dbReference type="Pfam" id="PF00049">
    <property type="entry name" value="Insulin"/>
    <property type="match status" value="2"/>
</dbReference>
<dbReference type="PRINTS" id="PR02002">
    <property type="entry name" value="INSLNLIKEGF"/>
</dbReference>
<dbReference type="PRINTS" id="PR02005">
    <property type="entry name" value="INSLNLIKEGF1"/>
</dbReference>
<dbReference type="PRINTS" id="PR00276">
    <property type="entry name" value="INSULINFAMLY"/>
</dbReference>
<dbReference type="SMART" id="SM00078">
    <property type="entry name" value="IlGF"/>
    <property type="match status" value="1"/>
</dbReference>
<dbReference type="SUPFAM" id="SSF56994">
    <property type="entry name" value="Insulin-like"/>
    <property type="match status" value="1"/>
</dbReference>
<dbReference type="PROSITE" id="PS00262">
    <property type="entry name" value="INSULIN"/>
    <property type="match status" value="1"/>
</dbReference>
<accession>Q90326</accession>
<protein>
    <recommendedName>
        <fullName evidence="6">Insulin-like growth factor 1, juvenile form</fullName>
    </recommendedName>
    <alternativeName>
        <fullName evidence="5">Insulin-like growth factor I, juvenile form</fullName>
    </alternativeName>
</protein>
<evidence type="ECO:0000250" key="1"/>
<evidence type="ECO:0000250" key="2">
    <source>
        <dbReference type="UniProtKB" id="P05019"/>
    </source>
</evidence>
<evidence type="ECO:0000255" key="3"/>
<evidence type="ECO:0000256" key="4">
    <source>
        <dbReference type="SAM" id="MobiDB-lite"/>
    </source>
</evidence>
<evidence type="ECO:0000303" key="5">
    <source>
    </source>
</evidence>
<evidence type="ECO:0000305" key="6"/>
<sequence>MSSGHFFQGHWCDVFKCTMRCLSCTHTLSLVLCVLALTPATLEAGPETLCGAELVDTLQFVCGDRGFYFSKPTGYGPSSRRSHNRGIVDECCFQSCELRRLEMYCAPVKPGKTPRSVRAQRHTDSPRTAKKPLPGQSHSSYKEVHQKNSSRGNTGGRNYRI</sequence>
<comment type="function">
    <text evidence="2">The insulin-like growth factors, isolated from plasma, are structurally and functionally related to insulin but have a much higher growth-promoting activity. Acts as a ligand for IGF1R. Binds to the alpha subunit of IGF1R, leading to the activation of the intrinsic tyrosine kinase activity which autophosphorylates tyrosine residues in the beta subunit thus initiatiating a cascade of down-stream signaling events leading to activation of the PI3K-AKT/PKB and the Ras-MAPK pathways. Binds to integrins. Its binding to integrins and subsequent ternary complex formation with integrins and IGFR1 are essential for IGF1 signaling.</text>
</comment>
<comment type="subcellular location">
    <subcellularLocation>
        <location>Secreted</location>
    </subcellularLocation>
</comment>
<comment type="similarity">
    <text evidence="6">Belongs to the insulin family.</text>
</comment>
<keyword id="KW-1015">Disulfide bond</keyword>
<keyword id="KW-0339">Growth factor</keyword>
<keyword id="KW-1185">Reference proteome</keyword>
<keyword id="KW-0964">Secreted</keyword>
<keyword id="KW-0732">Signal</keyword>
<feature type="signal peptide" evidence="3">
    <location>
        <begin position="1"/>
        <end status="unknown"/>
    </location>
</feature>
<feature type="propeptide" id="PRO_0000015699" evidence="3">
    <location>
        <begin status="unknown"/>
        <end position="44"/>
    </location>
</feature>
<feature type="chain" id="PRO_0000015700" description="Insulin-like growth factor 1, juvenile form">
    <location>
        <begin position="45"/>
        <end position="114"/>
    </location>
</feature>
<feature type="propeptide" id="PRO_0000015701" description="E peptide">
    <location>
        <begin position="115"/>
        <end position="161"/>
    </location>
</feature>
<feature type="region of interest" description="B">
    <location>
        <begin position="45"/>
        <end position="73"/>
    </location>
</feature>
<feature type="region of interest" description="C">
    <location>
        <begin position="74"/>
        <end position="85"/>
    </location>
</feature>
<feature type="region of interest" description="A">
    <location>
        <begin position="86"/>
        <end position="106"/>
    </location>
</feature>
<feature type="region of interest" description="D">
    <location>
        <begin position="107"/>
        <end position="114"/>
    </location>
</feature>
<feature type="region of interest" description="Disordered" evidence="4">
    <location>
        <begin position="111"/>
        <end position="161"/>
    </location>
</feature>
<feature type="disulfide bond" evidence="1">
    <location>
        <begin position="50"/>
        <end position="92"/>
    </location>
</feature>
<feature type="disulfide bond" evidence="1">
    <location>
        <begin position="62"/>
        <end position="105"/>
    </location>
</feature>
<feature type="disulfide bond" evidence="1">
    <location>
        <begin position="91"/>
        <end position="96"/>
    </location>
</feature>
<organism>
    <name type="scientific">Cyprinus carpio</name>
    <name type="common">Common carp</name>
    <dbReference type="NCBI Taxonomy" id="7962"/>
    <lineage>
        <taxon>Eukaryota</taxon>
        <taxon>Metazoa</taxon>
        <taxon>Chordata</taxon>
        <taxon>Craniata</taxon>
        <taxon>Vertebrata</taxon>
        <taxon>Euteleostomi</taxon>
        <taxon>Actinopterygii</taxon>
        <taxon>Neopterygii</taxon>
        <taxon>Teleostei</taxon>
        <taxon>Ostariophysi</taxon>
        <taxon>Cypriniformes</taxon>
        <taxon>Cyprinidae</taxon>
        <taxon>Cyprininae</taxon>
        <taxon>Cyprinus</taxon>
    </lineage>
</organism>